<name>METK1_TRIMO</name>
<protein>
    <recommendedName>
        <fullName>S-adenosylmethionine synthase 1</fullName>
        <shortName>AdoMet synthase 1</shortName>
        <ecNumber evidence="5">2.5.1.6</ecNumber>
    </recommendedName>
    <alternativeName>
        <fullName>Methionine adenosyltransferase 1</fullName>
        <shortName>MAT 1</shortName>
    </alternativeName>
</protein>
<proteinExistence type="evidence at transcript level"/>
<organism>
    <name type="scientific">Triticum monococcum</name>
    <name type="common">Einkorn wheat</name>
    <name type="synonym">Crithodium monococcum</name>
    <dbReference type="NCBI Taxonomy" id="4568"/>
    <lineage>
        <taxon>Eukaryota</taxon>
        <taxon>Viridiplantae</taxon>
        <taxon>Streptophyta</taxon>
        <taxon>Embryophyta</taxon>
        <taxon>Tracheophyta</taxon>
        <taxon>Spermatophyta</taxon>
        <taxon>Magnoliopsida</taxon>
        <taxon>Liliopsida</taxon>
        <taxon>Poales</taxon>
        <taxon>Poaceae</taxon>
        <taxon>BOP clade</taxon>
        <taxon>Pooideae</taxon>
        <taxon>Triticodae</taxon>
        <taxon>Triticeae</taxon>
        <taxon>Triticinae</taxon>
        <taxon>Triticum</taxon>
    </lineage>
</organism>
<dbReference type="EC" id="2.5.1.6" evidence="5"/>
<dbReference type="EMBL" id="DQ862831">
    <property type="protein sequence ID" value="ABJ15731.1"/>
    <property type="molecule type" value="mRNA"/>
</dbReference>
<dbReference type="SMR" id="A6XMY9"/>
<dbReference type="UniPathway" id="UPA00315">
    <property type="reaction ID" value="UER00080"/>
</dbReference>
<dbReference type="GO" id="GO:0005737">
    <property type="term" value="C:cytoplasm"/>
    <property type="evidence" value="ECO:0007669"/>
    <property type="project" value="UniProtKB-SubCell"/>
</dbReference>
<dbReference type="GO" id="GO:0005524">
    <property type="term" value="F:ATP binding"/>
    <property type="evidence" value="ECO:0007669"/>
    <property type="project" value="UniProtKB-KW"/>
</dbReference>
<dbReference type="GO" id="GO:0046872">
    <property type="term" value="F:metal ion binding"/>
    <property type="evidence" value="ECO:0007669"/>
    <property type="project" value="UniProtKB-KW"/>
</dbReference>
<dbReference type="GO" id="GO:0004478">
    <property type="term" value="F:methionine adenosyltransferase activity"/>
    <property type="evidence" value="ECO:0007669"/>
    <property type="project" value="UniProtKB-EC"/>
</dbReference>
<dbReference type="GO" id="GO:0006730">
    <property type="term" value="P:one-carbon metabolic process"/>
    <property type="evidence" value="ECO:0007669"/>
    <property type="project" value="UniProtKB-KW"/>
</dbReference>
<dbReference type="GO" id="GO:0006556">
    <property type="term" value="P:S-adenosylmethionine biosynthetic process"/>
    <property type="evidence" value="ECO:0007669"/>
    <property type="project" value="UniProtKB-UniPathway"/>
</dbReference>
<dbReference type="CDD" id="cd18079">
    <property type="entry name" value="S-AdoMet_synt"/>
    <property type="match status" value="1"/>
</dbReference>
<dbReference type="FunFam" id="3.30.300.10:FF:000001">
    <property type="entry name" value="S-adenosylmethionine synthase"/>
    <property type="match status" value="1"/>
</dbReference>
<dbReference type="FunFam" id="3.30.300.10:FF:000003">
    <property type="entry name" value="S-adenosylmethionine synthase"/>
    <property type="match status" value="1"/>
</dbReference>
<dbReference type="FunFam" id="3.30.300.10:FF:000004">
    <property type="entry name" value="S-adenosylmethionine synthase"/>
    <property type="match status" value="1"/>
</dbReference>
<dbReference type="Gene3D" id="3.30.300.10">
    <property type="match status" value="3"/>
</dbReference>
<dbReference type="HAMAP" id="MF_00086">
    <property type="entry name" value="S_AdoMet_synth1"/>
    <property type="match status" value="1"/>
</dbReference>
<dbReference type="InterPro" id="IPR022631">
    <property type="entry name" value="ADOMET_SYNTHASE_CS"/>
</dbReference>
<dbReference type="InterPro" id="IPR022630">
    <property type="entry name" value="S-AdoMet_synt_C"/>
</dbReference>
<dbReference type="InterPro" id="IPR022629">
    <property type="entry name" value="S-AdoMet_synt_central"/>
</dbReference>
<dbReference type="InterPro" id="IPR022628">
    <property type="entry name" value="S-AdoMet_synt_N"/>
</dbReference>
<dbReference type="InterPro" id="IPR002133">
    <property type="entry name" value="S-AdoMet_synthetase"/>
</dbReference>
<dbReference type="InterPro" id="IPR022636">
    <property type="entry name" value="S-AdoMet_synthetase_sfam"/>
</dbReference>
<dbReference type="NCBIfam" id="TIGR01034">
    <property type="entry name" value="metK"/>
    <property type="match status" value="1"/>
</dbReference>
<dbReference type="PANTHER" id="PTHR11964">
    <property type="entry name" value="S-ADENOSYLMETHIONINE SYNTHETASE"/>
    <property type="match status" value="1"/>
</dbReference>
<dbReference type="Pfam" id="PF02773">
    <property type="entry name" value="S-AdoMet_synt_C"/>
    <property type="match status" value="1"/>
</dbReference>
<dbReference type="Pfam" id="PF02772">
    <property type="entry name" value="S-AdoMet_synt_M"/>
    <property type="match status" value="1"/>
</dbReference>
<dbReference type="Pfam" id="PF00438">
    <property type="entry name" value="S-AdoMet_synt_N"/>
    <property type="match status" value="1"/>
</dbReference>
<dbReference type="PIRSF" id="PIRSF000497">
    <property type="entry name" value="MAT"/>
    <property type="match status" value="1"/>
</dbReference>
<dbReference type="SUPFAM" id="SSF55973">
    <property type="entry name" value="S-adenosylmethionine synthetase"/>
    <property type="match status" value="3"/>
</dbReference>
<dbReference type="PROSITE" id="PS00376">
    <property type="entry name" value="ADOMET_SYNTHASE_1"/>
    <property type="match status" value="1"/>
</dbReference>
<dbReference type="PROSITE" id="PS00377">
    <property type="entry name" value="ADOMET_SYNTHASE_2"/>
    <property type="match status" value="1"/>
</dbReference>
<reference key="1">
    <citation type="journal article" date="2007" name="Plant Mol. Biol.">
        <title>Transcriptional regulation of genes involved in the pathways of biosynthesis and supply of methyl units in response to powdery mildew attack and abiotic stresses in wheat.</title>
        <authorList>
            <person name="Bhuiyan N.H."/>
            <person name="Liu W."/>
            <person name="Liu G."/>
            <person name="Selvaraj G."/>
            <person name="Wei Y."/>
            <person name="King J."/>
        </authorList>
    </citation>
    <scope>NUCLEOTIDE SEQUENCE [MRNA]</scope>
    <scope>INDUCTION</scope>
    <source>
        <tissue>Epidermis</tissue>
    </source>
</reference>
<comment type="function">
    <text evidence="5">Catalyzes the formation of S-adenosylmethionine from methionine and ATP. The reaction comprises two steps that are both catalyzed by the same enzyme: formation of S-adenosylmethionine (AdoMet) and triphosphate, and subsequent hydrolysis of the triphosphate.</text>
</comment>
<comment type="catalytic activity">
    <reaction evidence="5">
        <text>L-methionine + ATP + H2O = S-adenosyl-L-methionine + phosphate + diphosphate</text>
        <dbReference type="Rhea" id="RHEA:21080"/>
        <dbReference type="ChEBI" id="CHEBI:15377"/>
        <dbReference type="ChEBI" id="CHEBI:30616"/>
        <dbReference type="ChEBI" id="CHEBI:33019"/>
        <dbReference type="ChEBI" id="CHEBI:43474"/>
        <dbReference type="ChEBI" id="CHEBI:57844"/>
        <dbReference type="ChEBI" id="CHEBI:59789"/>
        <dbReference type="EC" id="2.5.1.6"/>
    </reaction>
</comment>
<comment type="cofactor">
    <cofactor evidence="5">
        <name>Mn(2+)</name>
        <dbReference type="ChEBI" id="CHEBI:29035"/>
    </cofactor>
    <cofactor evidence="5">
        <name>Mg(2+)</name>
        <dbReference type="ChEBI" id="CHEBI:18420"/>
    </cofactor>
    <cofactor evidence="5">
        <name>Co(2+)</name>
        <dbReference type="ChEBI" id="CHEBI:48828"/>
    </cofactor>
    <text evidence="3 5">Binds 2 divalent ions per subunit. The metal ions interact primarily with the substrate (By similarity). Can utilize magnesium, manganese or cobalt (in vitro) (By similarity).</text>
</comment>
<comment type="cofactor">
    <cofactor evidence="5">
        <name>K(+)</name>
        <dbReference type="ChEBI" id="CHEBI:29103"/>
    </cofactor>
    <text evidence="3">Binds 1 potassium ion per subunit. The potassium ion interacts primarily with the substrate (By similarity).</text>
</comment>
<comment type="pathway">
    <text evidence="5">Amino-acid biosynthesis; S-adenosyl-L-methionine biosynthesis; S-adenosyl-L-methionine from L-methionine: step 1/1.</text>
</comment>
<comment type="subunit">
    <text evidence="1">Homotetramer.</text>
</comment>
<comment type="subcellular location">
    <subcellularLocation>
        <location evidence="1">Cytoplasm</location>
    </subcellularLocation>
</comment>
<comment type="induction">
    <text evidence="6">During compatible and incompatible interactions with Blumeria graminis f. sp. tritici, especially in the infected epidermis. Induced by abiotic stresses such as wounding, cold, drought, and salt.</text>
</comment>
<comment type="similarity">
    <text evidence="7">Belongs to the AdoMet synthase family.</text>
</comment>
<sequence>MAAETFLFTSESVNEGHPDKLCDQVSDAVLDACLAQDADSKVACETCTKTNMVMVFGEITTKATVDYEKIVRDTCRNIGFISDDVGLDADRCKVLVNIEQQSPDIAQGVHGHFTKRPEDIGAGDQGIMFGYATDETPELMPLSHVLATKLGARLTEVRKNGTCAWLRPDGKTQVTVEYLNEGGAMVPVRVHTVLISTQHDETVTNDEIAADLKEHVIKPVIPEKYLDEKTIFHLNPSGRFVIGGPHGDAGLTGRKIIIDTYGGWGAHGGGAFSGKDPTKVDRSGAYIARQAAKSIIASGLARRCIVQISYAIGVPEPLSVFVDSYGTGKIPDKEILKIVKENFDFRPGMISINLDLKKGGNRFIKTAAYGHFGREDADFTWEVVKPLKFDKASA</sequence>
<keyword id="KW-0067">ATP-binding</keyword>
<keyword id="KW-0170">Cobalt</keyword>
<keyword id="KW-0963">Cytoplasm</keyword>
<keyword id="KW-0460">Magnesium</keyword>
<keyword id="KW-0479">Metal-binding</keyword>
<keyword id="KW-0547">Nucleotide-binding</keyword>
<keyword id="KW-0554">One-carbon metabolism</keyword>
<keyword id="KW-0630">Potassium</keyword>
<keyword id="KW-0808">Transferase</keyword>
<evidence type="ECO:0000250" key="1"/>
<evidence type="ECO:0000250" key="2">
    <source>
        <dbReference type="UniProtKB" id="P0A817"/>
    </source>
</evidence>
<evidence type="ECO:0000250" key="3">
    <source>
        <dbReference type="UniProtKB" id="P13444"/>
    </source>
</evidence>
<evidence type="ECO:0000250" key="4">
    <source>
        <dbReference type="UniProtKB" id="Q00266"/>
    </source>
</evidence>
<evidence type="ECO:0000250" key="5">
    <source>
        <dbReference type="UniProtKB" id="Q96551"/>
    </source>
</evidence>
<evidence type="ECO:0000269" key="6">
    <source>
    </source>
</evidence>
<evidence type="ECO:0000305" key="7"/>
<gene>
    <name type="primary">SAMS1</name>
</gene>
<accession>A6XMY9</accession>
<feature type="chain" id="PRO_0000363053" description="S-adenosylmethionine synthase 1">
    <location>
        <begin position="1"/>
        <end position="394"/>
    </location>
</feature>
<feature type="binding site" evidence="3">
    <location>
        <position position="11"/>
    </location>
    <ligand>
        <name>Mg(2+)</name>
        <dbReference type="ChEBI" id="CHEBI:18420"/>
    </ligand>
</feature>
<feature type="binding site" description="in other chain" evidence="4">
    <location>
        <position position="17"/>
    </location>
    <ligand>
        <name>ATP</name>
        <dbReference type="ChEBI" id="CHEBI:30616"/>
        <note>ligand shared between two neighboring subunits</note>
    </ligand>
</feature>
<feature type="binding site" evidence="2">
    <location>
        <position position="45"/>
    </location>
    <ligand>
        <name>K(+)</name>
        <dbReference type="ChEBI" id="CHEBI:29103"/>
    </ligand>
</feature>
<feature type="binding site" description="in other chain" evidence="2">
    <location>
        <position position="58"/>
    </location>
    <ligand>
        <name>L-methionine</name>
        <dbReference type="ChEBI" id="CHEBI:57844"/>
        <note>ligand shared between two neighboring subunits</note>
    </ligand>
</feature>
<feature type="binding site" description="in other chain" evidence="2">
    <location>
        <position position="101"/>
    </location>
    <ligand>
        <name>L-methionine</name>
        <dbReference type="ChEBI" id="CHEBI:57844"/>
        <note>ligand shared between two neighboring subunits</note>
    </ligand>
</feature>
<feature type="binding site" description="in other chain" evidence="4">
    <location>
        <begin position="169"/>
        <end position="171"/>
    </location>
    <ligand>
        <name>ATP</name>
        <dbReference type="ChEBI" id="CHEBI:30616"/>
        <note>ligand shared between two neighboring subunits</note>
    </ligand>
</feature>
<feature type="binding site" description="in other chain" evidence="4">
    <location>
        <begin position="237"/>
        <end position="240"/>
    </location>
    <ligand>
        <name>ATP</name>
        <dbReference type="ChEBI" id="CHEBI:30616"/>
        <note>ligand shared between two neighboring subunits</note>
    </ligand>
</feature>
<feature type="binding site" description="in other chain" evidence="4">
    <location>
        <position position="248"/>
    </location>
    <ligand>
        <name>ATP</name>
        <dbReference type="ChEBI" id="CHEBI:30616"/>
        <note>ligand shared between two neighboring subunits</note>
    </ligand>
</feature>
<feature type="binding site" evidence="2">
    <location>
        <position position="248"/>
    </location>
    <ligand>
        <name>L-methionine</name>
        <dbReference type="ChEBI" id="CHEBI:57844"/>
        <note>ligand shared between two neighboring subunits</note>
    </ligand>
</feature>
<feature type="binding site" description="in other chain" evidence="2">
    <location>
        <begin position="254"/>
        <end position="255"/>
    </location>
    <ligand>
        <name>ATP</name>
        <dbReference type="ChEBI" id="CHEBI:30616"/>
        <note>ligand shared between two neighboring subunits</note>
    </ligand>
</feature>
<feature type="binding site" evidence="2">
    <location>
        <position position="271"/>
    </location>
    <ligand>
        <name>ATP</name>
        <dbReference type="ChEBI" id="CHEBI:30616"/>
        <note>ligand shared between two neighboring subunits</note>
    </ligand>
</feature>
<feature type="binding site" evidence="2">
    <location>
        <position position="275"/>
    </location>
    <ligand>
        <name>ATP</name>
        <dbReference type="ChEBI" id="CHEBI:30616"/>
        <note>ligand shared between two neighboring subunits</note>
    </ligand>
</feature>
<feature type="binding site" evidence="3">
    <location>
        <position position="279"/>
    </location>
    <ligand>
        <name>ATP</name>
        <dbReference type="ChEBI" id="CHEBI:30616"/>
        <note>ligand shared between two neighboring subunits</note>
    </ligand>
</feature>
<feature type="binding site" description="in other chain" evidence="2">
    <location>
        <position position="279"/>
    </location>
    <ligand>
        <name>L-methionine</name>
        <dbReference type="ChEBI" id="CHEBI:57844"/>
        <note>ligand shared between two neighboring subunits</note>
    </ligand>
</feature>